<reference key="1">
    <citation type="journal article" date="2000" name="Nature">
        <title>Genome sequence of the endocellular bacterial symbiont of aphids Buchnera sp. APS.</title>
        <authorList>
            <person name="Shigenobu S."/>
            <person name="Watanabe H."/>
            <person name="Hattori M."/>
            <person name="Sakaki Y."/>
            <person name="Ishikawa H."/>
        </authorList>
    </citation>
    <scope>NUCLEOTIDE SEQUENCE [LARGE SCALE GENOMIC DNA]</scope>
    <source>
        <strain>APS</strain>
    </source>
</reference>
<gene>
    <name evidence="1" type="primary">rplL</name>
    <name type="ordered locus">BU035</name>
</gene>
<name>RL7_BUCAI</name>
<feature type="chain" id="PRO_0000157510" description="Large ribosomal subunit protein bL12">
    <location>
        <begin position="1"/>
        <end position="122"/>
    </location>
</feature>
<accession>P57147</accession>
<keyword id="KW-1185">Reference proteome</keyword>
<keyword id="KW-0687">Ribonucleoprotein</keyword>
<keyword id="KW-0689">Ribosomal protein</keyword>
<dbReference type="EMBL" id="BA000003">
    <property type="protein sequence ID" value="BAB12762.1"/>
    <property type="molecule type" value="Genomic_DNA"/>
</dbReference>
<dbReference type="RefSeq" id="NP_239876.1">
    <property type="nucleotide sequence ID" value="NC_002528.1"/>
</dbReference>
<dbReference type="RefSeq" id="WP_009873996.1">
    <property type="nucleotide sequence ID" value="NZ_AP036055.1"/>
</dbReference>
<dbReference type="SMR" id="P57147"/>
<dbReference type="STRING" id="563178.BUAP5A_034"/>
<dbReference type="EnsemblBacteria" id="BAB12762">
    <property type="protein sequence ID" value="BAB12762"/>
    <property type="gene ID" value="BAB12762"/>
</dbReference>
<dbReference type="KEGG" id="buc:BU035"/>
<dbReference type="PATRIC" id="fig|107806.10.peg.48"/>
<dbReference type="eggNOG" id="COG0222">
    <property type="taxonomic scope" value="Bacteria"/>
</dbReference>
<dbReference type="HOGENOM" id="CLU_086499_3_2_6"/>
<dbReference type="Proteomes" id="UP000001806">
    <property type="component" value="Chromosome"/>
</dbReference>
<dbReference type="GO" id="GO:0022625">
    <property type="term" value="C:cytosolic large ribosomal subunit"/>
    <property type="evidence" value="ECO:0007669"/>
    <property type="project" value="TreeGrafter"/>
</dbReference>
<dbReference type="GO" id="GO:0003729">
    <property type="term" value="F:mRNA binding"/>
    <property type="evidence" value="ECO:0007669"/>
    <property type="project" value="TreeGrafter"/>
</dbReference>
<dbReference type="GO" id="GO:0003735">
    <property type="term" value="F:structural constituent of ribosome"/>
    <property type="evidence" value="ECO:0007669"/>
    <property type="project" value="InterPro"/>
</dbReference>
<dbReference type="GO" id="GO:0006412">
    <property type="term" value="P:translation"/>
    <property type="evidence" value="ECO:0007669"/>
    <property type="project" value="UniProtKB-UniRule"/>
</dbReference>
<dbReference type="CDD" id="cd00387">
    <property type="entry name" value="Ribosomal_L7_L12"/>
    <property type="match status" value="1"/>
</dbReference>
<dbReference type="FunFam" id="3.30.1390.10:FF:000001">
    <property type="entry name" value="50S ribosomal protein L7/L12"/>
    <property type="match status" value="1"/>
</dbReference>
<dbReference type="Gene3D" id="3.30.1390.10">
    <property type="match status" value="1"/>
</dbReference>
<dbReference type="Gene3D" id="1.20.5.710">
    <property type="entry name" value="Single helix bin"/>
    <property type="match status" value="1"/>
</dbReference>
<dbReference type="HAMAP" id="MF_00368">
    <property type="entry name" value="Ribosomal_bL12"/>
    <property type="match status" value="1"/>
</dbReference>
<dbReference type="InterPro" id="IPR000206">
    <property type="entry name" value="Ribosomal_bL12"/>
</dbReference>
<dbReference type="InterPro" id="IPR013823">
    <property type="entry name" value="Ribosomal_bL12_C"/>
</dbReference>
<dbReference type="InterPro" id="IPR014719">
    <property type="entry name" value="Ribosomal_bL12_C/ClpS-like"/>
</dbReference>
<dbReference type="InterPro" id="IPR008932">
    <property type="entry name" value="Ribosomal_bL12_oligo"/>
</dbReference>
<dbReference type="InterPro" id="IPR036235">
    <property type="entry name" value="Ribosomal_bL12_oligo_N_sf"/>
</dbReference>
<dbReference type="NCBIfam" id="TIGR00855">
    <property type="entry name" value="L12"/>
    <property type="match status" value="1"/>
</dbReference>
<dbReference type="PANTHER" id="PTHR45987">
    <property type="entry name" value="39S RIBOSOMAL PROTEIN L12"/>
    <property type="match status" value="1"/>
</dbReference>
<dbReference type="PANTHER" id="PTHR45987:SF4">
    <property type="entry name" value="LARGE RIBOSOMAL SUBUNIT PROTEIN BL12M"/>
    <property type="match status" value="1"/>
</dbReference>
<dbReference type="Pfam" id="PF00542">
    <property type="entry name" value="Ribosomal_L12"/>
    <property type="match status" value="1"/>
</dbReference>
<dbReference type="Pfam" id="PF16320">
    <property type="entry name" value="Ribosomal_L12_N"/>
    <property type="match status" value="1"/>
</dbReference>
<dbReference type="SUPFAM" id="SSF54736">
    <property type="entry name" value="ClpS-like"/>
    <property type="match status" value="1"/>
</dbReference>
<dbReference type="SUPFAM" id="SSF48300">
    <property type="entry name" value="Ribosomal protein L7/12, oligomerisation (N-terminal) domain"/>
    <property type="match status" value="1"/>
</dbReference>
<evidence type="ECO:0000255" key="1">
    <source>
        <dbReference type="HAMAP-Rule" id="MF_00368"/>
    </source>
</evidence>
<evidence type="ECO:0000305" key="2"/>
<protein>
    <recommendedName>
        <fullName evidence="1">Large ribosomal subunit protein bL12</fullName>
    </recommendedName>
    <alternativeName>
        <fullName evidence="2">50S ribosomal protein L7/L12</fullName>
    </alternativeName>
</protein>
<organism>
    <name type="scientific">Buchnera aphidicola subsp. Acyrthosiphon pisum (strain APS)</name>
    <name type="common">Acyrthosiphon pisum symbiotic bacterium</name>
    <dbReference type="NCBI Taxonomy" id="107806"/>
    <lineage>
        <taxon>Bacteria</taxon>
        <taxon>Pseudomonadati</taxon>
        <taxon>Pseudomonadota</taxon>
        <taxon>Gammaproteobacteria</taxon>
        <taxon>Enterobacterales</taxon>
        <taxon>Erwiniaceae</taxon>
        <taxon>Buchnera</taxon>
    </lineage>
</organism>
<sequence>MSITKEQILEAISEMSVMNVVDLITAMEEKFGVSASMSINSNNHNEKDLREEKTEFDIFLKVIGPNKVSVIKTVRSATGLGLKEAKDLVESAPTVLKENISKEDAESLKKTLEDVGAEIEIK</sequence>
<proteinExistence type="inferred from homology"/>
<comment type="function">
    <text evidence="1">Forms part of the ribosomal stalk which helps the ribosome interact with GTP-bound translation factors. Is thus essential for accurate translation.</text>
</comment>
<comment type="subunit">
    <text evidence="1">Homodimer. Part of the ribosomal stalk of the 50S ribosomal subunit. Forms a multimeric L10(L12)X complex, where L10 forms an elongated spine to which 2 to 4 L12 dimers bind in a sequential fashion. Binds GTP-bound translation factors.</text>
</comment>
<comment type="similarity">
    <text evidence="1">Belongs to the bacterial ribosomal protein bL12 family.</text>
</comment>